<organism>
    <name type="scientific">Oryza sativa subsp. indica</name>
    <name type="common">Rice</name>
    <dbReference type="NCBI Taxonomy" id="39946"/>
    <lineage>
        <taxon>Eukaryota</taxon>
        <taxon>Viridiplantae</taxon>
        <taxon>Streptophyta</taxon>
        <taxon>Embryophyta</taxon>
        <taxon>Tracheophyta</taxon>
        <taxon>Spermatophyta</taxon>
        <taxon>Magnoliopsida</taxon>
        <taxon>Liliopsida</taxon>
        <taxon>Poales</taxon>
        <taxon>Poaceae</taxon>
        <taxon>BOP clade</taxon>
        <taxon>Oryzoideae</taxon>
        <taxon>Oryzeae</taxon>
        <taxon>Oryzinae</taxon>
        <taxon>Oryza</taxon>
        <taxon>Oryza sativa</taxon>
    </lineage>
</organism>
<proteinExistence type="inferred from homology"/>
<gene>
    <name type="ORF">OsI_16049</name>
</gene>
<dbReference type="EMBL" id="CM000129">
    <property type="protein sequence ID" value="EAY94279.1"/>
    <property type="molecule type" value="Genomic_DNA"/>
</dbReference>
<dbReference type="SMR" id="A2XTW9"/>
<dbReference type="STRING" id="39946.A2XTW9"/>
<dbReference type="EnsemblPlants" id="BGIOSGA016480-TA">
    <property type="protein sequence ID" value="BGIOSGA016480-PA"/>
    <property type="gene ID" value="BGIOSGA016480"/>
</dbReference>
<dbReference type="Gramene" id="BGIOSGA016480-TA">
    <property type="protein sequence ID" value="BGIOSGA016480-PA"/>
    <property type="gene ID" value="BGIOSGA016480"/>
</dbReference>
<dbReference type="HOGENOM" id="CLU_058315_1_0_1"/>
<dbReference type="OMA" id="CGEAYTN"/>
<dbReference type="Proteomes" id="UP000007015">
    <property type="component" value="Chromosome 4"/>
</dbReference>
<dbReference type="GO" id="GO:0005634">
    <property type="term" value="C:nucleus"/>
    <property type="evidence" value="ECO:0007669"/>
    <property type="project" value="UniProtKB-SubCell"/>
</dbReference>
<dbReference type="GO" id="GO:0042393">
    <property type="term" value="F:histone binding"/>
    <property type="evidence" value="ECO:0007669"/>
    <property type="project" value="InterPro"/>
</dbReference>
<dbReference type="GO" id="GO:0000976">
    <property type="term" value="F:transcription cis-regulatory region binding"/>
    <property type="evidence" value="ECO:0007669"/>
    <property type="project" value="TreeGrafter"/>
</dbReference>
<dbReference type="GO" id="GO:0003712">
    <property type="term" value="F:transcription coregulator activity"/>
    <property type="evidence" value="ECO:0007669"/>
    <property type="project" value="TreeGrafter"/>
</dbReference>
<dbReference type="GO" id="GO:0008270">
    <property type="term" value="F:zinc ion binding"/>
    <property type="evidence" value="ECO:0007669"/>
    <property type="project" value="UniProtKB-KW"/>
</dbReference>
<dbReference type="GO" id="GO:0006325">
    <property type="term" value="P:chromatin organization"/>
    <property type="evidence" value="ECO:0007669"/>
    <property type="project" value="UniProtKB-KW"/>
</dbReference>
<dbReference type="GO" id="GO:0006355">
    <property type="term" value="P:regulation of DNA-templated transcription"/>
    <property type="evidence" value="ECO:0007669"/>
    <property type="project" value="InterPro"/>
</dbReference>
<dbReference type="CDD" id="cd15613">
    <property type="entry name" value="PHD_AL_plant"/>
    <property type="match status" value="1"/>
</dbReference>
<dbReference type="FunFam" id="3.30.40.10:FF:000306">
    <property type="entry name" value="PHD finger alfin-like protein"/>
    <property type="match status" value="1"/>
</dbReference>
<dbReference type="Gene3D" id="3.30.40.10">
    <property type="entry name" value="Zinc/RING finger domain, C3HC4 (zinc finger)"/>
    <property type="match status" value="1"/>
</dbReference>
<dbReference type="InterPro" id="IPR045104">
    <property type="entry name" value="Alfin"/>
</dbReference>
<dbReference type="InterPro" id="IPR021998">
    <property type="entry name" value="Alfin_N"/>
</dbReference>
<dbReference type="InterPro" id="IPR044104">
    <property type="entry name" value="PHD_AL_plant"/>
</dbReference>
<dbReference type="InterPro" id="IPR019786">
    <property type="entry name" value="Zinc_finger_PHD-type_CS"/>
</dbReference>
<dbReference type="InterPro" id="IPR011011">
    <property type="entry name" value="Znf_FYVE_PHD"/>
</dbReference>
<dbReference type="InterPro" id="IPR001965">
    <property type="entry name" value="Znf_PHD"/>
</dbReference>
<dbReference type="InterPro" id="IPR019787">
    <property type="entry name" value="Znf_PHD-finger"/>
</dbReference>
<dbReference type="InterPro" id="IPR013083">
    <property type="entry name" value="Znf_RING/FYVE/PHD"/>
</dbReference>
<dbReference type="PANTHER" id="PTHR12321">
    <property type="entry name" value="CPG BINDING PROTEIN"/>
    <property type="match status" value="1"/>
</dbReference>
<dbReference type="PANTHER" id="PTHR12321:SF105">
    <property type="entry name" value="PHD FINGER PROTEIN ALFIN-LIKE 7"/>
    <property type="match status" value="1"/>
</dbReference>
<dbReference type="Pfam" id="PF12165">
    <property type="entry name" value="Alfin"/>
    <property type="match status" value="1"/>
</dbReference>
<dbReference type="Pfam" id="PF00628">
    <property type="entry name" value="PHD"/>
    <property type="match status" value="1"/>
</dbReference>
<dbReference type="SMART" id="SM00249">
    <property type="entry name" value="PHD"/>
    <property type="match status" value="1"/>
</dbReference>
<dbReference type="SUPFAM" id="SSF57903">
    <property type="entry name" value="FYVE/PHD zinc finger"/>
    <property type="match status" value="1"/>
</dbReference>
<dbReference type="PROSITE" id="PS01359">
    <property type="entry name" value="ZF_PHD_1"/>
    <property type="match status" value="1"/>
</dbReference>
<dbReference type="PROSITE" id="PS50016">
    <property type="entry name" value="ZF_PHD_2"/>
    <property type="match status" value="1"/>
</dbReference>
<sequence>MDGGYGSVTIVHDARSPEDVFQDFCGRRSGIVKALTIEVEKFYKQCDPEKENLCLYGLPNGTWAVTLPADEVPPELPEPALGHNFARDGMQEKDWLSLIAVHSDSWLLSVAFYFGARFGFDKKARERLFMMTSSLPTVFEVVSGGVNTQSKTANGSSKNKSGSKPPKRPNSDSKPQKQVQAKYEEENGGRGNGGDEDQAETICGACGEAYANGEFWICCDICETWFHGKCVRITPAKAEHIKHYKCPGCSNKRTRE</sequence>
<accession>A2XTW9</accession>
<protein>
    <recommendedName>
        <fullName>PHD finger protein ALFIN-LIKE 4</fullName>
    </recommendedName>
</protein>
<comment type="function">
    <text evidence="1">Histone-binding component that specifically recognizes H3 tails trimethylated on 'Lys-4' (H3K4me3), which mark transcription start sites of virtually all active genes.</text>
</comment>
<comment type="subunit">
    <text evidence="1">Interacts with H3K4me3 and to a lesser extent with H3K4me2.</text>
</comment>
<comment type="subcellular location">
    <subcellularLocation>
        <location evidence="1">Nucleus</location>
    </subcellularLocation>
</comment>
<comment type="domain">
    <text evidence="1">The PHD-type zinc finger mediates the binding to H3K4me3.</text>
</comment>
<comment type="similarity">
    <text evidence="4">Belongs to the Alfin family.</text>
</comment>
<evidence type="ECO:0000250" key="1"/>
<evidence type="ECO:0000255" key="2">
    <source>
        <dbReference type="PROSITE-ProRule" id="PRU00146"/>
    </source>
</evidence>
<evidence type="ECO:0000256" key="3">
    <source>
        <dbReference type="SAM" id="MobiDB-lite"/>
    </source>
</evidence>
<evidence type="ECO:0000305" key="4"/>
<keyword id="KW-0156">Chromatin regulator</keyword>
<keyword id="KW-0479">Metal-binding</keyword>
<keyword id="KW-0539">Nucleus</keyword>
<keyword id="KW-1185">Reference proteome</keyword>
<keyword id="KW-0804">Transcription</keyword>
<keyword id="KW-0805">Transcription regulation</keyword>
<keyword id="KW-0862">Zinc</keyword>
<keyword id="KW-0863">Zinc-finger</keyword>
<name>ALFL4_ORYSI</name>
<reference key="1">
    <citation type="journal article" date="2005" name="PLoS Biol.">
        <title>The genomes of Oryza sativa: a history of duplications.</title>
        <authorList>
            <person name="Yu J."/>
            <person name="Wang J."/>
            <person name="Lin W."/>
            <person name="Li S."/>
            <person name="Li H."/>
            <person name="Zhou J."/>
            <person name="Ni P."/>
            <person name="Dong W."/>
            <person name="Hu S."/>
            <person name="Zeng C."/>
            <person name="Zhang J."/>
            <person name="Zhang Y."/>
            <person name="Li R."/>
            <person name="Xu Z."/>
            <person name="Li S."/>
            <person name="Li X."/>
            <person name="Zheng H."/>
            <person name="Cong L."/>
            <person name="Lin L."/>
            <person name="Yin J."/>
            <person name="Geng J."/>
            <person name="Li G."/>
            <person name="Shi J."/>
            <person name="Liu J."/>
            <person name="Lv H."/>
            <person name="Li J."/>
            <person name="Wang J."/>
            <person name="Deng Y."/>
            <person name="Ran L."/>
            <person name="Shi X."/>
            <person name="Wang X."/>
            <person name="Wu Q."/>
            <person name="Li C."/>
            <person name="Ren X."/>
            <person name="Wang J."/>
            <person name="Wang X."/>
            <person name="Li D."/>
            <person name="Liu D."/>
            <person name="Zhang X."/>
            <person name="Ji Z."/>
            <person name="Zhao W."/>
            <person name="Sun Y."/>
            <person name="Zhang Z."/>
            <person name="Bao J."/>
            <person name="Han Y."/>
            <person name="Dong L."/>
            <person name="Ji J."/>
            <person name="Chen P."/>
            <person name="Wu S."/>
            <person name="Liu J."/>
            <person name="Xiao Y."/>
            <person name="Bu D."/>
            <person name="Tan J."/>
            <person name="Yang L."/>
            <person name="Ye C."/>
            <person name="Zhang J."/>
            <person name="Xu J."/>
            <person name="Zhou Y."/>
            <person name="Yu Y."/>
            <person name="Zhang B."/>
            <person name="Zhuang S."/>
            <person name="Wei H."/>
            <person name="Liu B."/>
            <person name="Lei M."/>
            <person name="Yu H."/>
            <person name="Li Y."/>
            <person name="Xu H."/>
            <person name="Wei S."/>
            <person name="He X."/>
            <person name="Fang L."/>
            <person name="Zhang Z."/>
            <person name="Zhang Y."/>
            <person name="Huang X."/>
            <person name="Su Z."/>
            <person name="Tong W."/>
            <person name="Li J."/>
            <person name="Tong Z."/>
            <person name="Li S."/>
            <person name="Ye J."/>
            <person name="Wang L."/>
            <person name="Fang L."/>
            <person name="Lei T."/>
            <person name="Chen C.-S."/>
            <person name="Chen H.-C."/>
            <person name="Xu Z."/>
            <person name="Li H."/>
            <person name="Huang H."/>
            <person name="Zhang F."/>
            <person name="Xu H."/>
            <person name="Li N."/>
            <person name="Zhao C."/>
            <person name="Li S."/>
            <person name="Dong L."/>
            <person name="Huang Y."/>
            <person name="Li L."/>
            <person name="Xi Y."/>
            <person name="Qi Q."/>
            <person name="Li W."/>
            <person name="Zhang B."/>
            <person name="Hu W."/>
            <person name="Zhang Y."/>
            <person name="Tian X."/>
            <person name="Jiao Y."/>
            <person name="Liang X."/>
            <person name="Jin J."/>
            <person name="Gao L."/>
            <person name="Zheng W."/>
            <person name="Hao B."/>
            <person name="Liu S.-M."/>
            <person name="Wang W."/>
            <person name="Yuan L."/>
            <person name="Cao M."/>
            <person name="McDermott J."/>
            <person name="Samudrala R."/>
            <person name="Wang J."/>
            <person name="Wong G.K.-S."/>
            <person name="Yang H."/>
        </authorList>
    </citation>
    <scope>NUCLEOTIDE SEQUENCE [LARGE SCALE GENOMIC DNA]</scope>
    <source>
        <strain>cv. 93-11</strain>
    </source>
</reference>
<feature type="chain" id="PRO_0000412942" description="PHD finger protein ALFIN-LIKE 4">
    <location>
        <begin position="1"/>
        <end position="256"/>
    </location>
</feature>
<feature type="zinc finger region" description="PHD-type" evidence="2">
    <location>
        <begin position="200"/>
        <end position="252"/>
    </location>
</feature>
<feature type="region of interest" description="Disordered" evidence="3">
    <location>
        <begin position="149"/>
        <end position="195"/>
    </location>
</feature>
<feature type="compositionally biased region" description="Low complexity" evidence="3">
    <location>
        <begin position="154"/>
        <end position="164"/>
    </location>
</feature>
<feature type="site" description="Histone H3K4me3 binding" evidence="1">
    <location>
        <position position="210"/>
    </location>
</feature>
<feature type="site" description="Histone H3K4me3 binding" evidence="1">
    <location>
        <position position="216"/>
    </location>
</feature>
<feature type="site" description="Histone H3K4me3 binding" evidence="1">
    <location>
        <position position="220"/>
    </location>
</feature>
<feature type="site" description="Histone H3K4me3 binding" evidence="1">
    <location>
        <position position="225"/>
    </location>
</feature>